<name>LEXA_OLEA2</name>
<sequence length="207" mass="22762">MGRNREDDITPLQQETLDEICRYVSAKGYPPTVKEMSETFGISHASVHDRINQLVRKGYLKREEGKARGLTVTKHPQTNAVALVAVPIVGTVAAGHPIFAHENITGEVLVEASVVGSGKCFALYTQGDSMIDAGINDGDLIIVRRQPIAEDGDIVIALLDDEATVKRLKIDNELIELVPENPRLKPIRVKPEDELRILGKVVGRKRI</sequence>
<comment type="function">
    <text evidence="1">Represses a number of genes involved in the response to DNA damage (SOS response), including recA and lexA. In the presence of single-stranded DNA, RecA interacts with LexA causing an autocatalytic cleavage which disrupts the DNA-binding part of LexA, leading to derepression of the SOS regulon and eventually DNA repair.</text>
</comment>
<comment type="catalytic activity">
    <reaction evidence="1">
        <text>Hydrolysis of Ala-|-Gly bond in repressor LexA.</text>
        <dbReference type="EC" id="3.4.21.88"/>
    </reaction>
</comment>
<comment type="subunit">
    <text evidence="1">Homodimer.</text>
</comment>
<comment type="similarity">
    <text evidence="1">Belongs to the peptidase S24 family.</text>
</comment>
<feature type="chain" id="PRO_0000322731" description="LexA repressor">
    <location>
        <begin position="1"/>
        <end position="207"/>
    </location>
</feature>
<feature type="DNA-binding region" description="H-T-H motif" evidence="1">
    <location>
        <begin position="33"/>
        <end position="52"/>
    </location>
</feature>
<feature type="active site" description="For autocatalytic cleavage activity" evidence="1">
    <location>
        <position position="129"/>
    </location>
</feature>
<feature type="active site" description="For autocatalytic cleavage activity" evidence="1">
    <location>
        <position position="166"/>
    </location>
</feature>
<feature type="site" description="Cleavage; by autolysis" evidence="1">
    <location>
        <begin position="94"/>
        <end position="95"/>
    </location>
</feature>
<gene>
    <name evidence="1" type="primary">lexA</name>
    <name type="ordered locus">Dde_0893</name>
</gene>
<accession>Q314F2</accession>
<organism>
    <name type="scientific">Oleidesulfovibrio alaskensis (strain ATCC BAA-1058 / DSM 17464 / G20)</name>
    <name type="common">Desulfovibrio alaskensis</name>
    <dbReference type="NCBI Taxonomy" id="207559"/>
    <lineage>
        <taxon>Bacteria</taxon>
        <taxon>Pseudomonadati</taxon>
        <taxon>Thermodesulfobacteriota</taxon>
        <taxon>Desulfovibrionia</taxon>
        <taxon>Desulfovibrionales</taxon>
        <taxon>Desulfovibrionaceae</taxon>
        <taxon>Oleidesulfovibrio</taxon>
    </lineage>
</organism>
<protein>
    <recommendedName>
        <fullName evidence="1">LexA repressor</fullName>
        <ecNumber evidence="1">3.4.21.88</ecNumber>
    </recommendedName>
</protein>
<evidence type="ECO:0000255" key="1">
    <source>
        <dbReference type="HAMAP-Rule" id="MF_00015"/>
    </source>
</evidence>
<dbReference type="EC" id="3.4.21.88" evidence="1"/>
<dbReference type="EMBL" id="CP000112">
    <property type="protein sequence ID" value="ABB37694.1"/>
    <property type="molecule type" value="Genomic_DNA"/>
</dbReference>
<dbReference type="RefSeq" id="WP_011366939.1">
    <property type="nucleotide sequence ID" value="NC_007519.1"/>
</dbReference>
<dbReference type="SMR" id="Q314F2"/>
<dbReference type="STRING" id="207559.Dde_0893"/>
<dbReference type="MEROPS" id="S24.001"/>
<dbReference type="KEGG" id="dde:Dde_0893"/>
<dbReference type="eggNOG" id="COG1974">
    <property type="taxonomic scope" value="Bacteria"/>
</dbReference>
<dbReference type="HOGENOM" id="CLU_066192_45_1_7"/>
<dbReference type="Proteomes" id="UP000002710">
    <property type="component" value="Chromosome"/>
</dbReference>
<dbReference type="GO" id="GO:0003677">
    <property type="term" value="F:DNA binding"/>
    <property type="evidence" value="ECO:0007669"/>
    <property type="project" value="UniProtKB-UniRule"/>
</dbReference>
<dbReference type="GO" id="GO:0004252">
    <property type="term" value="F:serine-type endopeptidase activity"/>
    <property type="evidence" value="ECO:0007669"/>
    <property type="project" value="UniProtKB-UniRule"/>
</dbReference>
<dbReference type="GO" id="GO:0006281">
    <property type="term" value="P:DNA repair"/>
    <property type="evidence" value="ECO:0007669"/>
    <property type="project" value="UniProtKB-UniRule"/>
</dbReference>
<dbReference type="GO" id="GO:0006260">
    <property type="term" value="P:DNA replication"/>
    <property type="evidence" value="ECO:0007669"/>
    <property type="project" value="UniProtKB-UniRule"/>
</dbReference>
<dbReference type="GO" id="GO:0045892">
    <property type="term" value="P:negative regulation of DNA-templated transcription"/>
    <property type="evidence" value="ECO:0007669"/>
    <property type="project" value="UniProtKB-UniRule"/>
</dbReference>
<dbReference type="GO" id="GO:0006508">
    <property type="term" value="P:proteolysis"/>
    <property type="evidence" value="ECO:0007669"/>
    <property type="project" value="InterPro"/>
</dbReference>
<dbReference type="GO" id="GO:0009432">
    <property type="term" value="P:SOS response"/>
    <property type="evidence" value="ECO:0007669"/>
    <property type="project" value="UniProtKB-UniRule"/>
</dbReference>
<dbReference type="CDD" id="cd06529">
    <property type="entry name" value="S24_LexA-like"/>
    <property type="match status" value="1"/>
</dbReference>
<dbReference type="FunFam" id="2.10.109.10:FF:000001">
    <property type="entry name" value="LexA repressor"/>
    <property type="match status" value="1"/>
</dbReference>
<dbReference type="Gene3D" id="2.10.109.10">
    <property type="entry name" value="Umud Fragment, subunit A"/>
    <property type="match status" value="1"/>
</dbReference>
<dbReference type="Gene3D" id="1.10.10.10">
    <property type="entry name" value="Winged helix-like DNA-binding domain superfamily/Winged helix DNA-binding domain"/>
    <property type="match status" value="1"/>
</dbReference>
<dbReference type="HAMAP" id="MF_00015">
    <property type="entry name" value="LexA"/>
    <property type="match status" value="1"/>
</dbReference>
<dbReference type="InterPro" id="IPR006200">
    <property type="entry name" value="LexA"/>
</dbReference>
<dbReference type="InterPro" id="IPR039418">
    <property type="entry name" value="LexA-like"/>
</dbReference>
<dbReference type="InterPro" id="IPR036286">
    <property type="entry name" value="LexA/Signal_pep-like_sf"/>
</dbReference>
<dbReference type="InterPro" id="IPR006199">
    <property type="entry name" value="LexA_DNA-bd_dom"/>
</dbReference>
<dbReference type="InterPro" id="IPR050077">
    <property type="entry name" value="LexA_repressor"/>
</dbReference>
<dbReference type="InterPro" id="IPR006197">
    <property type="entry name" value="Peptidase_S24_LexA"/>
</dbReference>
<dbReference type="InterPro" id="IPR015927">
    <property type="entry name" value="Peptidase_S24_S26A/B/C"/>
</dbReference>
<dbReference type="InterPro" id="IPR019885">
    <property type="entry name" value="Tscrpt_reg_HTH_AsnC-type_CS"/>
</dbReference>
<dbReference type="InterPro" id="IPR036388">
    <property type="entry name" value="WH-like_DNA-bd_sf"/>
</dbReference>
<dbReference type="InterPro" id="IPR036390">
    <property type="entry name" value="WH_DNA-bd_sf"/>
</dbReference>
<dbReference type="NCBIfam" id="TIGR00498">
    <property type="entry name" value="lexA"/>
    <property type="match status" value="1"/>
</dbReference>
<dbReference type="PANTHER" id="PTHR33516">
    <property type="entry name" value="LEXA REPRESSOR"/>
    <property type="match status" value="1"/>
</dbReference>
<dbReference type="PANTHER" id="PTHR33516:SF2">
    <property type="entry name" value="LEXA REPRESSOR-RELATED"/>
    <property type="match status" value="1"/>
</dbReference>
<dbReference type="Pfam" id="PF01726">
    <property type="entry name" value="LexA_DNA_bind"/>
    <property type="match status" value="1"/>
</dbReference>
<dbReference type="Pfam" id="PF00717">
    <property type="entry name" value="Peptidase_S24"/>
    <property type="match status" value="1"/>
</dbReference>
<dbReference type="PRINTS" id="PR00726">
    <property type="entry name" value="LEXASERPTASE"/>
</dbReference>
<dbReference type="SUPFAM" id="SSF51306">
    <property type="entry name" value="LexA/Signal peptidase"/>
    <property type="match status" value="1"/>
</dbReference>
<dbReference type="SUPFAM" id="SSF46785">
    <property type="entry name" value="Winged helix' DNA-binding domain"/>
    <property type="match status" value="1"/>
</dbReference>
<reference key="1">
    <citation type="journal article" date="2011" name="J. Bacteriol.">
        <title>Complete genome sequence and updated annotation of Desulfovibrio alaskensis G20.</title>
        <authorList>
            <person name="Hauser L.J."/>
            <person name="Land M.L."/>
            <person name="Brown S.D."/>
            <person name="Larimer F."/>
            <person name="Keller K.L."/>
            <person name="Rapp-Giles B.J."/>
            <person name="Price M.N."/>
            <person name="Lin M."/>
            <person name="Bruce D.C."/>
            <person name="Detter J.C."/>
            <person name="Tapia R."/>
            <person name="Han C.S."/>
            <person name="Goodwin L.A."/>
            <person name="Cheng J.F."/>
            <person name="Pitluck S."/>
            <person name="Copeland A."/>
            <person name="Lucas S."/>
            <person name="Nolan M."/>
            <person name="Lapidus A.L."/>
            <person name="Palumbo A.V."/>
            <person name="Wall J.D."/>
        </authorList>
    </citation>
    <scope>NUCLEOTIDE SEQUENCE [LARGE SCALE GENOMIC DNA]</scope>
    <source>
        <strain>ATCC BAA-1058 / DSM 17464 / G20</strain>
    </source>
</reference>
<proteinExistence type="inferred from homology"/>
<keyword id="KW-0068">Autocatalytic cleavage</keyword>
<keyword id="KW-0227">DNA damage</keyword>
<keyword id="KW-0234">DNA repair</keyword>
<keyword id="KW-0235">DNA replication</keyword>
<keyword id="KW-0238">DNA-binding</keyword>
<keyword id="KW-0378">Hydrolase</keyword>
<keyword id="KW-1185">Reference proteome</keyword>
<keyword id="KW-0678">Repressor</keyword>
<keyword id="KW-0742">SOS response</keyword>
<keyword id="KW-0804">Transcription</keyword>
<keyword id="KW-0805">Transcription regulation</keyword>